<evidence type="ECO:0000255" key="1">
    <source>
        <dbReference type="HAMAP-Rule" id="MF_01570"/>
    </source>
</evidence>
<sequence>MRLSQYYLPTLKEKPAHARIISHQYSLRAGLIKQIASGIYTWLPLGLRVLKNIEGIIRDEMNKSGAIEALMPCVQPASLWRESGRYDDYGKTMLRIRDRHEEDMLFGPTHEEVATDLIRDIVKSYKNLPLCLYQIQWKFRDEVRPRYGVMRGREFLMKDAYSFNVNYESALNSYNLMYKTYIKIFKRMGLIPIGVRADTGLIGGNLSHEFHILASTGESTLYYDNKFFELLESEDVKSLKSIYAVADDIHDPKTCPVPQEQLNVSKGIEIGHIFYFGDKYSKPMNAKVTAQDGKNVNIHMGSYGIGVSRLVGAIIEAFHDDKGITWPEAVAPFRVGLINLQTKTAEYVEIANKIYSTLKSDEVLYDDTEGSIGVKFAKMDLIGLPWQIIVGKKAVSENIIEIKNRATGKVEEVQIEEAINYFNVK</sequence>
<gene>
    <name evidence="1" type="primary">proS</name>
    <name type="ordered locus">Wbm0077</name>
</gene>
<reference key="1">
    <citation type="journal article" date="2005" name="PLoS Biol.">
        <title>The Wolbachia genome of Brugia malayi: endosymbiont evolution within a human pathogenic nematode.</title>
        <authorList>
            <person name="Foster J."/>
            <person name="Ganatra M."/>
            <person name="Kamal I."/>
            <person name="Ware J."/>
            <person name="Makarova K."/>
            <person name="Ivanova N."/>
            <person name="Bhattacharyya A."/>
            <person name="Kapatral V."/>
            <person name="Kumar S."/>
            <person name="Posfai J."/>
            <person name="Vincze T."/>
            <person name="Ingram J."/>
            <person name="Moran L."/>
            <person name="Lapidus A."/>
            <person name="Omelchenko M."/>
            <person name="Kyrpides N."/>
            <person name="Ghedin E."/>
            <person name="Wang S."/>
            <person name="Goltsman E."/>
            <person name="Joukov V."/>
            <person name="Ostrovskaya O."/>
            <person name="Tsukerman K."/>
            <person name="Mazur M."/>
            <person name="Comb D."/>
            <person name="Koonin E."/>
            <person name="Slatko B."/>
        </authorList>
    </citation>
    <scope>NUCLEOTIDE SEQUENCE [LARGE SCALE GENOMIC DNA]</scope>
    <source>
        <strain>TRS</strain>
    </source>
</reference>
<dbReference type="EC" id="6.1.1.15" evidence="1"/>
<dbReference type="EMBL" id="AE017321">
    <property type="protein sequence ID" value="AAW70669.1"/>
    <property type="molecule type" value="Genomic_DNA"/>
</dbReference>
<dbReference type="RefSeq" id="WP_011256279.1">
    <property type="nucleotide sequence ID" value="NC_006833.1"/>
</dbReference>
<dbReference type="SMR" id="Q5GTK5"/>
<dbReference type="STRING" id="292805.Wbm0077"/>
<dbReference type="KEGG" id="wbm:Wbm0077"/>
<dbReference type="eggNOG" id="COG0442">
    <property type="taxonomic scope" value="Bacteria"/>
</dbReference>
<dbReference type="HOGENOM" id="CLU_016739_4_2_5"/>
<dbReference type="Proteomes" id="UP000000534">
    <property type="component" value="Chromosome"/>
</dbReference>
<dbReference type="GO" id="GO:0005829">
    <property type="term" value="C:cytosol"/>
    <property type="evidence" value="ECO:0007669"/>
    <property type="project" value="TreeGrafter"/>
</dbReference>
<dbReference type="GO" id="GO:0005524">
    <property type="term" value="F:ATP binding"/>
    <property type="evidence" value="ECO:0007669"/>
    <property type="project" value="UniProtKB-UniRule"/>
</dbReference>
<dbReference type="GO" id="GO:0004827">
    <property type="term" value="F:proline-tRNA ligase activity"/>
    <property type="evidence" value="ECO:0007669"/>
    <property type="project" value="UniProtKB-UniRule"/>
</dbReference>
<dbReference type="GO" id="GO:0006433">
    <property type="term" value="P:prolyl-tRNA aminoacylation"/>
    <property type="evidence" value="ECO:0007669"/>
    <property type="project" value="UniProtKB-UniRule"/>
</dbReference>
<dbReference type="CDD" id="cd00861">
    <property type="entry name" value="ProRS_anticodon_short"/>
    <property type="match status" value="1"/>
</dbReference>
<dbReference type="CDD" id="cd00779">
    <property type="entry name" value="ProRS_core_prok"/>
    <property type="match status" value="1"/>
</dbReference>
<dbReference type="FunFam" id="3.30.930.10:FF:000042">
    <property type="entry name" value="probable proline--tRNA ligase, mitochondrial"/>
    <property type="match status" value="1"/>
</dbReference>
<dbReference type="FunFam" id="3.40.50.800:FF:000032">
    <property type="entry name" value="Proline--tRNA ligase"/>
    <property type="match status" value="1"/>
</dbReference>
<dbReference type="Gene3D" id="3.40.50.800">
    <property type="entry name" value="Anticodon-binding domain"/>
    <property type="match status" value="1"/>
</dbReference>
<dbReference type="Gene3D" id="3.30.930.10">
    <property type="entry name" value="Bira Bifunctional Protein, Domain 2"/>
    <property type="match status" value="1"/>
</dbReference>
<dbReference type="HAMAP" id="MF_01570">
    <property type="entry name" value="Pro_tRNA_synth_type2"/>
    <property type="match status" value="1"/>
</dbReference>
<dbReference type="InterPro" id="IPR002314">
    <property type="entry name" value="aa-tRNA-synt_IIb"/>
</dbReference>
<dbReference type="InterPro" id="IPR006195">
    <property type="entry name" value="aa-tRNA-synth_II"/>
</dbReference>
<dbReference type="InterPro" id="IPR045864">
    <property type="entry name" value="aa-tRNA-synth_II/BPL/LPL"/>
</dbReference>
<dbReference type="InterPro" id="IPR004154">
    <property type="entry name" value="Anticodon-bd"/>
</dbReference>
<dbReference type="InterPro" id="IPR036621">
    <property type="entry name" value="Anticodon-bd_dom_sf"/>
</dbReference>
<dbReference type="InterPro" id="IPR002316">
    <property type="entry name" value="Pro-tRNA-ligase_IIa"/>
</dbReference>
<dbReference type="InterPro" id="IPR004500">
    <property type="entry name" value="Pro-tRNA-synth_IIa_bac-type"/>
</dbReference>
<dbReference type="InterPro" id="IPR050062">
    <property type="entry name" value="Pro-tRNA_synthetase"/>
</dbReference>
<dbReference type="InterPro" id="IPR023716">
    <property type="entry name" value="Prolyl-tRNA_ligase_IIa_type2"/>
</dbReference>
<dbReference type="InterPro" id="IPR044140">
    <property type="entry name" value="ProRS_anticodon_short"/>
</dbReference>
<dbReference type="InterPro" id="IPR033730">
    <property type="entry name" value="ProRS_core_prok"/>
</dbReference>
<dbReference type="NCBIfam" id="NF008979">
    <property type="entry name" value="PRK12325.1"/>
    <property type="match status" value="1"/>
</dbReference>
<dbReference type="NCBIfam" id="TIGR00409">
    <property type="entry name" value="proS_fam_II"/>
    <property type="match status" value="1"/>
</dbReference>
<dbReference type="PANTHER" id="PTHR42753">
    <property type="entry name" value="MITOCHONDRIAL RIBOSOME PROTEIN L39/PROLYL-TRNA LIGASE FAMILY MEMBER"/>
    <property type="match status" value="1"/>
</dbReference>
<dbReference type="PANTHER" id="PTHR42753:SF2">
    <property type="entry name" value="PROLINE--TRNA LIGASE"/>
    <property type="match status" value="1"/>
</dbReference>
<dbReference type="Pfam" id="PF03129">
    <property type="entry name" value="HGTP_anticodon"/>
    <property type="match status" value="1"/>
</dbReference>
<dbReference type="Pfam" id="PF00587">
    <property type="entry name" value="tRNA-synt_2b"/>
    <property type="match status" value="1"/>
</dbReference>
<dbReference type="PRINTS" id="PR01046">
    <property type="entry name" value="TRNASYNTHPRO"/>
</dbReference>
<dbReference type="SUPFAM" id="SSF52954">
    <property type="entry name" value="Class II aaRS ABD-related"/>
    <property type="match status" value="1"/>
</dbReference>
<dbReference type="SUPFAM" id="SSF55681">
    <property type="entry name" value="Class II aaRS and biotin synthetases"/>
    <property type="match status" value="1"/>
</dbReference>
<dbReference type="PROSITE" id="PS50862">
    <property type="entry name" value="AA_TRNA_LIGASE_II"/>
    <property type="match status" value="1"/>
</dbReference>
<name>SYP_WOLTR</name>
<protein>
    <recommendedName>
        <fullName evidence="1">Proline--tRNA ligase</fullName>
        <ecNumber evidence="1">6.1.1.15</ecNumber>
    </recommendedName>
    <alternativeName>
        <fullName evidence="1">Prolyl-tRNA synthetase</fullName>
        <shortName evidence="1">ProRS</shortName>
    </alternativeName>
</protein>
<comment type="function">
    <text evidence="1">Catalyzes the attachment of proline to tRNA(Pro) in a two-step reaction: proline is first activated by ATP to form Pro-AMP and then transferred to the acceptor end of tRNA(Pro).</text>
</comment>
<comment type="catalytic activity">
    <reaction evidence="1">
        <text>tRNA(Pro) + L-proline + ATP = L-prolyl-tRNA(Pro) + AMP + diphosphate</text>
        <dbReference type="Rhea" id="RHEA:14305"/>
        <dbReference type="Rhea" id="RHEA-COMP:9700"/>
        <dbReference type="Rhea" id="RHEA-COMP:9702"/>
        <dbReference type="ChEBI" id="CHEBI:30616"/>
        <dbReference type="ChEBI" id="CHEBI:33019"/>
        <dbReference type="ChEBI" id="CHEBI:60039"/>
        <dbReference type="ChEBI" id="CHEBI:78442"/>
        <dbReference type="ChEBI" id="CHEBI:78532"/>
        <dbReference type="ChEBI" id="CHEBI:456215"/>
        <dbReference type="EC" id="6.1.1.15"/>
    </reaction>
</comment>
<comment type="subunit">
    <text evidence="1">Homodimer.</text>
</comment>
<comment type="subcellular location">
    <subcellularLocation>
        <location evidence="1">Cytoplasm</location>
    </subcellularLocation>
</comment>
<comment type="similarity">
    <text evidence="1">Belongs to the class-II aminoacyl-tRNA synthetase family. ProS type 2 subfamily.</text>
</comment>
<accession>Q5GTK5</accession>
<proteinExistence type="inferred from homology"/>
<organism>
    <name type="scientific">Wolbachia sp. subsp. Brugia malayi (strain TRS)</name>
    <dbReference type="NCBI Taxonomy" id="292805"/>
    <lineage>
        <taxon>Bacteria</taxon>
        <taxon>Pseudomonadati</taxon>
        <taxon>Pseudomonadota</taxon>
        <taxon>Alphaproteobacteria</taxon>
        <taxon>Rickettsiales</taxon>
        <taxon>Anaplasmataceae</taxon>
        <taxon>Wolbachieae</taxon>
        <taxon>Wolbachia</taxon>
    </lineage>
</organism>
<keyword id="KW-0030">Aminoacyl-tRNA synthetase</keyword>
<keyword id="KW-0067">ATP-binding</keyword>
<keyword id="KW-0963">Cytoplasm</keyword>
<keyword id="KW-0436">Ligase</keyword>
<keyword id="KW-0547">Nucleotide-binding</keyword>
<keyword id="KW-0648">Protein biosynthesis</keyword>
<keyword id="KW-1185">Reference proteome</keyword>
<feature type="chain" id="PRO_0000248922" description="Proline--tRNA ligase">
    <location>
        <begin position="1"/>
        <end position="425"/>
    </location>
</feature>